<protein>
    <recommendedName>
        <fullName evidence="1">Small ribosomal subunit protein eS17</fullName>
    </recommendedName>
    <alternativeName>
        <fullName evidence="2">30S ribosomal protein S17e</fullName>
    </alternativeName>
</protein>
<evidence type="ECO:0000255" key="1">
    <source>
        <dbReference type="HAMAP-Rule" id="MF_00511"/>
    </source>
</evidence>
<evidence type="ECO:0000305" key="2"/>
<keyword id="KW-1185">Reference proteome</keyword>
<keyword id="KW-0687">Ribonucleoprotein</keyword>
<keyword id="KW-0689">Ribosomal protein</keyword>
<organism>
    <name type="scientific">Methanococcus maripaludis (strain DSM 14266 / JCM 13030 / NBRC 101832 / S2 / LL)</name>
    <dbReference type="NCBI Taxonomy" id="267377"/>
    <lineage>
        <taxon>Archaea</taxon>
        <taxon>Methanobacteriati</taxon>
        <taxon>Methanobacteriota</taxon>
        <taxon>Methanomada group</taxon>
        <taxon>Methanococci</taxon>
        <taxon>Methanococcales</taxon>
        <taxon>Methanococcaceae</taxon>
        <taxon>Methanococcus</taxon>
    </lineage>
</organism>
<accession>Q6LZP7</accession>
<dbReference type="EMBL" id="BX950229">
    <property type="protein sequence ID" value="CAF30133.1"/>
    <property type="molecule type" value="Genomic_DNA"/>
</dbReference>
<dbReference type="RefSeq" id="WP_011170521.1">
    <property type="nucleotide sequence ID" value="NC_005791.1"/>
</dbReference>
<dbReference type="SMR" id="Q6LZP7"/>
<dbReference type="STRING" id="267377.MMP0577"/>
<dbReference type="EnsemblBacteria" id="CAF30133">
    <property type="protein sequence ID" value="CAF30133"/>
    <property type="gene ID" value="MMP0577"/>
</dbReference>
<dbReference type="KEGG" id="mmp:MMP0577"/>
<dbReference type="PATRIC" id="fig|267377.15.peg.590"/>
<dbReference type="eggNOG" id="arCOG01885">
    <property type="taxonomic scope" value="Archaea"/>
</dbReference>
<dbReference type="HOGENOM" id="CLU_176720_0_1_2"/>
<dbReference type="OrthoDB" id="52479at2157"/>
<dbReference type="Proteomes" id="UP000000590">
    <property type="component" value="Chromosome"/>
</dbReference>
<dbReference type="GO" id="GO:0005829">
    <property type="term" value="C:cytosol"/>
    <property type="evidence" value="ECO:0007669"/>
    <property type="project" value="UniProtKB-ARBA"/>
</dbReference>
<dbReference type="GO" id="GO:1990904">
    <property type="term" value="C:ribonucleoprotein complex"/>
    <property type="evidence" value="ECO:0007669"/>
    <property type="project" value="UniProtKB-KW"/>
</dbReference>
<dbReference type="GO" id="GO:0005840">
    <property type="term" value="C:ribosome"/>
    <property type="evidence" value="ECO:0007669"/>
    <property type="project" value="UniProtKB-KW"/>
</dbReference>
<dbReference type="GO" id="GO:0003735">
    <property type="term" value="F:structural constituent of ribosome"/>
    <property type="evidence" value="ECO:0007669"/>
    <property type="project" value="InterPro"/>
</dbReference>
<dbReference type="GO" id="GO:0006412">
    <property type="term" value="P:translation"/>
    <property type="evidence" value="ECO:0007669"/>
    <property type="project" value="UniProtKB-UniRule"/>
</dbReference>
<dbReference type="Gene3D" id="1.10.60.20">
    <property type="entry name" value="Ribosomal protein S17e-like"/>
    <property type="match status" value="1"/>
</dbReference>
<dbReference type="HAMAP" id="MF_00511">
    <property type="entry name" value="Ribosomal_eS17"/>
    <property type="match status" value="1"/>
</dbReference>
<dbReference type="InterPro" id="IPR001210">
    <property type="entry name" value="Ribosomal_eS17"/>
</dbReference>
<dbReference type="InterPro" id="IPR018273">
    <property type="entry name" value="Ribosomal_eS17_CS"/>
</dbReference>
<dbReference type="InterPro" id="IPR036401">
    <property type="entry name" value="Ribosomal_eS17_sf"/>
</dbReference>
<dbReference type="NCBIfam" id="NF002242">
    <property type="entry name" value="PRK01151.1"/>
    <property type="match status" value="1"/>
</dbReference>
<dbReference type="PANTHER" id="PTHR10732">
    <property type="entry name" value="40S RIBOSOMAL PROTEIN S17"/>
    <property type="match status" value="1"/>
</dbReference>
<dbReference type="PANTHER" id="PTHR10732:SF0">
    <property type="entry name" value="40S RIBOSOMAL PROTEIN S17"/>
    <property type="match status" value="1"/>
</dbReference>
<dbReference type="Pfam" id="PF00833">
    <property type="entry name" value="Ribosomal_S17e"/>
    <property type="match status" value="1"/>
</dbReference>
<dbReference type="SUPFAM" id="SSF116820">
    <property type="entry name" value="Rps17e-like"/>
    <property type="match status" value="1"/>
</dbReference>
<dbReference type="PROSITE" id="PS00712">
    <property type="entry name" value="RIBOSOMAL_S17E"/>
    <property type="match status" value="1"/>
</dbReference>
<name>RS17E_METMP</name>
<gene>
    <name evidence="1" type="primary">rps17e</name>
    <name type="ordered locus">MMP0577</name>
</gene>
<sequence>MGRIRQTFIKRTGEELIEKFADKFTSDFEENKKAVEEVAMISTKPLRNRIAGYVTAKVKKMNA</sequence>
<reference key="1">
    <citation type="journal article" date="2004" name="J. Bacteriol.">
        <title>Complete genome sequence of the genetically tractable hydrogenotrophic methanogen Methanococcus maripaludis.</title>
        <authorList>
            <person name="Hendrickson E.L."/>
            <person name="Kaul R."/>
            <person name="Zhou Y."/>
            <person name="Bovee D."/>
            <person name="Chapman P."/>
            <person name="Chung J."/>
            <person name="Conway de Macario E."/>
            <person name="Dodsworth J.A."/>
            <person name="Gillett W."/>
            <person name="Graham D.E."/>
            <person name="Hackett M."/>
            <person name="Haydock A.K."/>
            <person name="Kang A."/>
            <person name="Land M.L."/>
            <person name="Levy R."/>
            <person name="Lie T.J."/>
            <person name="Major T.A."/>
            <person name="Moore B.C."/>
            <person name="Porat I."/>
            <person name="Palmeiri A."/>
            <person name="Rouse G."/>
            <person name="Saenphimmachak C."/>
            <person name="Soell D."/>
            <person name="Van Dien S."/>
            <person name="Wang T."/>
            <person name="Whitman W.B."/>
            <person name="Xia Q."/>
            <person name="Zhang Y."/>
            <person name="Larimer F.W."/>
            <person name="Olson M.V."/>
            <person name="Leigh J.A."/>
        </authorList>
    </citation>
    <scope>NUCLEOTIDE SEQUENCE [LARGE SCALE GENOMIC DNA]</scope>
    <source>
        <strain>DSM 14266 / JCM 13030 / NBRC 101832 / S2 / LL</strain>
    </source>
</reference>
<proteinExistence type="inferred from homology"/>
<comment type="similarity">
    <text evidence="1">Belongs to the eukaryotic ribosomal protein eS17 family.</text>
</comment>
<feature type="chain" id="PRO_0000141556" description="Small ribosomal subunit protein eS17">
    <location>
        <begin position="1"/>
        <end position="63"/>
    </location>
</feature>